<evidence type="ECO:0000255" key="1">
    <source>
        <dbReference type="HAMAP-Rule" id="MF_00152"/>
    </source>
</evidence>
<protein>
    <recommendedName>
        <fullName evidence="1">Probable endonuclease 4</fullName>
        <ecNumber evidence="1">3.1.21.2</ecNumber>
    </recommendedName>
    <alternativeName>
        <fullName evidence="1">Endodeoxyribonuclease IV</fullName>
    </alternativeName>
    <alternativeName>
        <fullName evidence="1">Endonuclease IV</fullName>
    </alternativeName>
</protein>
<accession>Q8Z593</accession>
<sequence length="285" mass="31210">MKYIGAHVSAAGGLANAPARAAEIGATAFALFTKNQRQWRAAPLTPQVIDDFKIACEKYHFSAAQILPHDSYLINLGHPVSEALEKSRDAFLDEMQRCEQLGLTLLNFHPGSHLMQIAQEDCLARIAESINIALAQTEGVTAVIENTAGQGSNLGFEFEQLAAIIDGVEDKSRVGVCIDTCHAFAAGYDLRTPEACEKTFAEFGKIVGFQYLRGMHLNDAKSAFGSRVDRHHSLGEGNIGHDAFRWIMQDARFDGIPLILETINPDIWAEEIAWLKAQQIAEAMA</sequence>
<keyword id="KW-0227">DNA damage</keyword>
<keyword id="KW-0234">DNA repair</keyword>
<keyword id="KW-0255">Endonuclease</keyword>
<keyword id="KW-0378">Hydrolase</keyword>
<keyword id="KW-0479">Metal-binding</keyword>
<keyword id="KW-0540">Nuclease</keyword>
<keyword id="KW-0862">Zinc</keyword>
<gene>
    <name evidence="1" type="primary">nfo</name>
    <name type="ordered locus">STY2438</name>
    <name type="ordered locus">t0652</name>
</gene>
<reference key="1">
    <citation type="journal article" date="2001" name="Nature">
        <title>Complete genome sequence of a multiple drug resistant Salmonella enterica serovar Typhi CT18.</title>
        <authorList>
            <person name="Parkhill J."/>
            <person name="Dougan G."/>
            <person name="James K.D."/>
            <person name="Thomson N.R."/>
            <person name="Pickard D."/>
            <person name="Wain J."/>
            <person name="Churcher C.M."/>
            <person name="Mungall K.L."/>
            <person name="Bentley S.D."/>
            <person name="Holden M.T.G."/>
            <person name="Sebaihia M."/>
            <person name="Baker S."/>
            <person name="Basham D."/>
            <person name="Brooks K."/>
            <person name="Chillingworth T."/>
            <person name="Connerton P."/>
            <person name="Cronin A."/>
            <person name="Davis P."/>
            <person name="Davies R.M."/>
            <person name="Dowd L."/>
            <person name="White N."/>
            <person name="Farrar J."/>
            <person name="Feltwell T."/>
            <person name="Hamlin N."/>
            <person name="Haque A."/>
            <person name="Hien T.T."/>
            <person name="Holroyd S."/>
            <person name="Jagels K."/>
            <person name="Krogh A."/>
            <person name="Larsen T.S."/>
            <person name="Leather S."/>
            <person name="Moule S."/>
            <person name="O'Gaora P."/>
            <person name="Parry C."/>
            <person name="Quail M.A."/>
            <person name="Rutherford K.M."/>
            <person name="Simmonds M."/>
            <person name="Skelton J."/>
            <person name="Stevens K."/>
            <person name="Whitehead S."/>
            <person name="Barrell B.G."/>
        </authorList>
    </citation>
    <scope>NUCLEOTIDE SEQUENCE [LARGE SCALE GENOMIC DNA]</scope>
    <source>
        <strain>CT18</strain>
    </source>
</reference>
<reference key="2">
    <citation type="journal article" date="2003" name="J. Bacteriol.">
        <title>Comparative genomics of Salmonella enterica serovar Typhi strains Ty2 and CT18.</title>
        <authorList>
            <person name="Deng W."/>
            <person name="Liou S.-R."/>
            <person name="Plunkett G. III"/>
            <person name="Mayhew G.F."/>
            <person name="Rose D.J."/>
            <person name="Burland V."/>
            <person name="Kodoyianni V."/>
            <person name="Schwartz D.C."/>
            <person name="Blattner F.R."/>
        </authorList>
    </citation>
    <scope>NUCLEOTIDE SEQUENCE [LARGE SCALE GENOMIC DNA]</scope>
    <source>
        <strain>ATCC 700931 / Ty2</strain>
    </source>
</reference>
<organism>
    <name type="scientific">Salmonella typhi</name>
    <dbReference type="NCBI Taxonomy" id="90370"/>
    <lineage>
        <taxon>Bacteria</taxon>
        <taxon>Pseudomonadati</taxon>
        <taxon>Pseudomonadota</taxon>
        <taxon>Gammaproteobacteria</taxon>
        <taxon>Enterobacterales</taxon>
        <taxon>Enterobacteriaceae</taxon>
        <taxon>Salmonella</taxon>
    </lineage>
</organism>
<proteinExistence type="inferred from homology"/>
<name>END4_SALTI</name>
<feature type="chain" id="PRO_0000190866" description="Probable endonuclease 4">
    <location>
        <begin position="1"/>
        <end position="285"/>
    </location>
</feature>
<feature type="binding site" evidence="1">
    <location>
        <position position="69"/>
    </location>
    <ligand>
        <name>Zn(2+)</name>
        <dbReference type="ChEBI" id="CHEBI:29105"/>
        <label>1</label>
    </ligand>
</feature>
<feature type="binding site" evidence="1">
    <location>
        <position position="109"/>
    </location>
    <ligand>
        <name>Zn(2+)</name>
        <dbReference type="ChEBI" id="CHEBI:29105"/>
        <label>1</label>
    </ligand>
</feature>
<feature type="binding site" evidence="1">
    <location>
        <position position="145"/>
    </location>
    <ligand>
        <name>Zn(2+)</name>
        <dbReference type="ChEBI" id="CHEBI:29105"/>
        <label>1</label>
    </ligand>
</feature>
<feature type="binding site" evidence="1">
    <location>
        <position position="145"/>
    </location>
    <ligand>
        <name>Zn(2+)</name>
        <dbReference type="ChEBI" id="CHEBI:29105"/>
        <label>2</label>
    </ligand>
</feature>
<feature type="binding site" evidence="1">
    <location>
        <position position="179"/>
    </location>
    <ligand>
        <name>Zn(2+)</name>
        <dbReference type="ChEBI" id="CHEBI:29105"/>
        <label>2</label>
    </ligand>
</feature>
<feature type="binding site" evidence="1">
    <location>
        <position position="182"/>
    </location>
    <ligand>
        <name>Zn(2+)</name>
        <dbReference type="ChEBI" id="CHEBI:29105"/>
        <label>3</label>
    </ligand>
</feature>
<feature type="binding site" evidence="1">
    <location>
        <position position="216"/>
    </location>
    <ligand>
        <name>Zn(2+)</name>
        <dbReference type="ChEBI" id="CHEBI:29105"/>
        <label>2</label>
    </ligand>
</feature>
<feature type="binding site" evidence="1">
    <location>
        <position position="229"/>
    </location>
    <ligand>
        <name>Zn(2+)</name>
        <dbReference type="ChEBI" id="CHEBI:29105"/>
        <label>3</label>
    </ligand>
</feature>
<feature type="binding site" evidence="1">
    <location>
        <position position="231"/>
    </location>
    <ligand>
        <name>Zn(2+)</name>
        <dbReference type="ChEBI" id="CHEBI:29105"/>
        <label>3</label>
    </ligand>
</feature>
<feature type="binding site" evidence="1">
    <location>
        <position position="261"/>
    </location>
    <ligand>
        <name>Zn(2+)</name>
        <dbReference type="ChEBI" id="CHEBI:29105"/>
        <label>2</label>
    </ligand>
</feature>
<dbReference type="EC" id="3.1.21.2" evidence="1"/>
<dbReference type="EMBL" id="AL513382">
    <property type="protein sequence ID" value="CAD02585.1"/>
    <property type="molecule type" value="Genomic_DNA"/>
</dbReference>
<dbReference type="EMBL" id="AE014613">
    <property type="protein sequence ID" value="AAO68353.1"/>
    <property type="molecule type" value="Genomic_DNA"/>
</dbReference>
<dbReference type="RefSeq" id="NP_456761.1">
    <property type="nucleotide sequence ID" value="NC_003198.1"/>
</dbReference>
<dbReference type="RefSeq" id="WP_000873905.1">
    <property type="nucleotide sequence ID" value="NZ_WSUR01000002.1"/>
</dbReference>
<dbReference type="SMR" id="Q8Z593"/>
<dbReference type="STRING" id="220341.gene:17586340"/>
<dbReference type="KEGG" id="stt:t0652"/>
<dbReference type="KEGG" id="sty:STY2438"/>
<dbReference type="PATRIC" id="fig|220341.7.peg.2465"/>
<dbReference type="eggNOG" id="COG0648">
    <property type="taxonomic scope" value="Bacteria"/>
</dbReference>
<dbReference type="HOGENOM" id="CLU_025885_0_4_6"/>
<dbReference type="OMA" id="HPGSHLR"/>
<dbReference type="OrthoDB" id="9805666at2"/>
<dbReference type="Proteomes" id="UP000000541">
    <property type="component" value="Chromosome"/>
</dbReference>
<dbReference type="Proteomes" id="UP000002670">
    <property type="component" value="Chromosome"/>
</dbReference>
<dbReference type="GO" id="GO:0008833">
    <property type="term" value="F:deoxyribonuclease IV (phage-T4-induced) activity"/>
    <property type="evidence" value="ECO:0007669"/>
    <property type="project" value="UniProtKB-UniRule"/>
</dbReference>
<dbReference type="GO" id="GO:0003677">
    <property type="term" value="F:DNA binding"/>
    <property type="evidence" value="ECO:0007669"/>
    <property type="project" value="InterPro"/>
</dbReference>
<dbReference type="GO" id="GO:0003906">
    <property type="term" value="F:DNA-(apurinic or apyrimidinic site) endonuclease activity"/>
    <property type="evidence" value="ECO:0007669"/>
    <property type="project" value="TreeGrafter"/>
</dbReference>
<dbReference type="GO" id="GO:0008081">
    <property type="term" value="F:phosphoric diester hydrolase activity"/>
    <property type="evidence" value="ECO:0007669"/>
    <property type="project" value="TreeGrafter"/>
</dbReference>
<dbReference type="GO" id="GO:0008270">
    <property type="term" value="F:zinc ion binding"/>
    <property type="evidence" value="ECO:0007669"/>
    <property type="project" value="UniProtKB-UniRule"/>
</dbReference>
<dbReference type="GO" id="GO:0006284">
    <property type="term" value="P:base-excision repair"/>
    <property type="evidence" value="ECO:0007669"/>
    <property type="project" value="TreeGrafter"/>
</dbReference>
<dbReference type="CDD" id="cd00019">
    <property type="entry name" value="AP2Ec"/>
    <property type="match status" value="1"/>
</dbReference>
<dbReference type="FunFam" id="3.20.20.150:FF:000001">
    <property type="entry name" value="Probable endonuclease 4"/>
    <property type="match status" value="1"/>
</dbReference>
<dbReference type="Gene3D" id="3.20.20.150">
    <property type="entry name" value="Divalent-metal-dependent TIM barrel enzymes"/>
    <property type="match status" value="1"/>
</dbReference>
<dbReference type="HAMAP" id="MF_00152">
    <property type="entry name" value="Nfo"/>
    <property type="match status" value="1"/>
</dbReference>
<dbReference type="InterPro" id="IPR001719">
    <property type="entry name" value="AP_endonuc_2"/>
</dbReference>
<dbReference type="InterPro" id="IPR018246">
    <property type="entry name" value="AP_endonuc_F2_Zn_BS"/>
</dbReference>
<dbReference type="InterPro" id="IPR036237">
    <property type="entry name" value="Xyl_isomerase-like_sf"/>
</dbReference>
<dbReference type="InterPro" id="IPR013022">
    <property type="entry name" value="Xyl_isomerase-like_TIM-brl"/>
</dbReference>
<dbReference type="NCBIfam" id="TIGR00587">
    <property type="entry name" value="nfo"/>
    <property type="match status" value="1"/>
</dbReference>
<dbReference type="NCBIfam" id="NF002199">
    <property type="entry name" value="PRK01060.1-4"/>
    <property type="match status" value="1"/>
</dbReference>
<dbReference type="PANTHER" id="PTHR21445:SF0">
    <property type="entry name" value="APURINIC-APYRIMIDINIC ENDONUCLEASE"/>
    <property type="match status" value="1"/>
</dbReference>
<dbReference type="PANTHER" id="PTHR21445">
    <property type="entry name" value="ENDONUCLEASE IV ENDODEOXYRIBONUCLEASE IV"/>
    <property type="match status" value="1"/>
</dbReference>
<dbReference type="Pfam" id="PF01261">
    <property type="entry name" value="AP_endonuc_2"/>
    <property type="match status" value="1"/>
</dbReference>
<dbReference type="SMART" id="SM00518">
    <property type="entry name" value="AP2Ec"/>
    <property type="match status" value="1"/>
</dbReference>
<dbReference type="SUPFAM" id="SSF51658">
    <property type="entry name" value="Xylose isomerase-like"/>
    <property type="match status" value="1"/>
</dbReference>
<dbReference type="PROSITE" id="PS00729">
    <property type="entry name" value="AP_NUCLEASE_F2_1"/>
    <property type="match status" value="1"/>
</dbReference>
<dbReference type="PROSITE" id="PS00730">
    <property type="entry name" value="AP_NUCLEASE_F2_2"/>
    <property type="match status" value="1"/>
</dbReference>
<dbReference type="PROSITE" id="PS00731">
    <property type="entry name" value="AP_NUCLEASE_F2_3"/>
    <property type="match status" value="1"/>
</dbReference>
<dbReference type="PROSITE" id="PS51432">
    <property type="entry name" value="AP_NUCLEASE_F2_4"/>
    <property type="match status" value="1"/>
</dbReference>
<comment type="function">
    <text evidence="1">Endonuclease IV plays a role in DNA repair. It cleaves phosphodiester bonds at apurinic or apyrimidinic (AP) sites, generating a 3'-hydroxyl group and a 5'-terminal sugar phosphate.</text>
</comment>
<comment type="catalytic activity">
    <reaction evidence="1">
        <text>Endonucleolytic cleavage to 5'-phosphooligonucleotide end-products.</text>
        <dbReference type="EC" id="3.1.21.2"/>
    </reaction>
</comment>
<comment type="cofactor">
    <cofactor evidence="1">
        <name>Zn(2+)</name>
        <dbReference type="ChEBI" id="CHEBI:29105"/>
    </cofactor>
    <text evidence="1">Binds 3 Zn(2+) ions.</text>
</comment>
<comment type="similarity">
    <text evidence="1">Belongs to the AP endonuclease 2 family.</text>
</comment>